<comment type="function">
    <text evidence="8 9">Non-canonical non-ribosomal peptide synthetase; part of the asc-1 gene cluster that mediates the biosynthesis of both ascochlorin and ascofuranone, a strong inhibitor of cyanide-insensitive alternative oxidases and a promising drug candidate against African trypanosomiasis (PubMed:30952781, PubMed:35418536). The first step in the pathway is performed by the non-reducing polyketide synthase ascC that produces orsellinic acid by condensing acetyl-CoA with 3 malonyl-CoA units (PubMed:30952781, PubMed:35418536). Orsellinic acid is then prenylated by the prenyltransferase ascA to yield ilicicolinic acid B (PubMed:30952781, PubMed:35418536). Ilicicolinic acid B is further reduced to ilicicolin B by the reductase ascB (PubMed:30952781, PubMed:35418536). The halogenase ascD then chlorinates ilicicolin B to produce ilicicolin A which is converted to ilicicolin A epoxide by the cytochrome P450 monooxygenase ascE that catalyzes stereoselective epoxidation of the terminal double bond of the prenyl group (PubMed:30952781, PubMed:35418536). Ilicicolin A epoxide is the last common precursor for the biosynthesis of ascofuranone and ascochlorin (PubMed:30952781, PubMed:35418536). The terpene cyclase ascF produces a monocyclic terpene, and the cyclization reaction is proposed to be initiated by protonation of the terminal epoxide of ilicicolin A epoxide to generate a monocyclic tertiarycation, which is followed by a series of hydride and methyl shifts with abstraction of proton, leading to the formation of the (14S,15R,19R)-trimethylcyclohexanone ring structure of ilicicolin C, which is finally reduced to ascochlorin by the dehydrogenase ascG (PubMed:30952781). On the other hand, ilicicolin A epoxide is hydroxylated by the cytochrome P450 monooxygenase ascH, and the resultant product is cyclized by the terpene cyclase ascI to ascofuranol via protonation-initiated epoxide ring opening, which facilitates the 6-endo-tet cyclization to form the tetrahy-drofuran ring (PubMed:30952781, PubMed:35418536). Finally, ascofuranol is oxidized into ascofuranone by ascJ (PubMed:30952781, PubMed:35418536).</text>
</comment>
<comment type="catalytic activity">
    <reaction evidence="8 9">
        <text>ilicicolinate B + AH2 + ATP = ilicicolin B + A + AMP + diphosphate</text>
        <dbReference type="Rhea" id="RHEA:63080"/>
        <dbReference type="ChEBI" id="CHEBI:13193"/>
        <dbReference type="ChEBI" id="CHEBI:17499"/>
        <dbReference type="ChEBI" id="CHEBI:30616"/>
        <dbReference type="ChEBI" id="CHEBI:33019"/>
        <dbReference type="ChEBI" id="CHEBI:146152"/>
        <dbReference type="ChEBI" id="CHEBI:146153"/>
        <dbReference type="ChEBI" id="CHEBI:456215"/>
    </reaction>
    <physiologicalReaction direction="left-to-right" evidence="8 9">
        <dbReference type="Rhea" id="RHEA:63081"/>
    </physiologicalReaction>
</comment>
<comment type="pathway">
    <text evidence="8 9">Secondary metabolite biosynthesis; terpenoid biosynthesis.</text>
</comment>
<comment type="induction">
    <text evidence="8">Expression is induced on AF medium.</text>
</comment>
<comment type="domain">
    <text evidence="1">Contains three distinct domains: an adenylation (A) domain that activates the substrate amino acid which is subsequently covalently linked as a thioester (aminoacyl-S-PCP) to the 4'-phosphopantetheine prosthetic group of the second domain, the peptidyl carrier protein (PCP) domain, as well as a thioester reductase (TR) release domain.</text>
</comment>
<comment type="biotechnology">
    <text evidence="5 6 7">Ascofuranone is a specific inhibitor of trypanosome alternative oxidase (TAO), and quickly kills African trypanosomes in vitro and cures infected mice. As an essential factor for trypanosome survival, TAO is a promising drug target due to the absence of alternative oxidases in the mammalian host.</text>
</comment>
<comment type="similarity">
    <text evidence="11">Belongs to the NRP synthetase family.</text>
</comment>
<reference key="1">
    <citation type="journal article" date="2019" name="Proc. Natl. Acad. Sci. U.S.A.">
        <title>Complete biosynthetic pathways of ascofuranone and ascochlorin in Acremonium egyptiacum.</title>
        <authorList>
            <person name="Araki Y."/>
            <person name="Awakawa T."/>
            <person name="Matsuzaki M."/>
            <person name="Cho R."/>
            <person name="Matsuda Y."/>
            <person name="Hoshino S."/>
            <person name="Shinohara Y."/>
            <person name="Yamamoto M."/>
            <person name="Kido Y."/>
            <person name="Inaoka D.K."/>
            <person name="Nagamune K."/>
            <person name="Ito K."/>
            <person name="Abe I."/>
            <person name="Kita K."/>
        </authorList>
    </citation>
    <scope>NUCLEOTIDE SEQUENCE [GENOMIC DNA]</scope>
    <scope>FUNCTION</scope>
    <scope>CATALYTIC ACTIVITY</scope>
    <scope>INDUCTION</scope>
    <scope>PATHWAY</scope>
    <source>
        <strain>F-1392</strain>
    </source>
</reference>
<reference key="2">
    <citation type="journal article" date="2002" name="Biochim. Biophys. Acta">
        <title>Trypanosome alternative oxidase as a target of chemotherapy.</title>
        <authorList>
            <person name="Nihei C."/>
            <person name="Fukai Y."/>
            <person name="Kita K."/>
        </authorList>
    </citation>
    <scope>BIOTECHNOLOGY</scope>
</reference>
<reference key="3">
    <citation type="journal article" date="2003" name="Parasitol. Int.">
        <title>The efficacy of ascofuranone in a consecutive treatment on Trypanosoma brucei brucei in mice.</title>
        <authorList>
            <person name="Yabu Y."/>
            <person name="Yoshida A."/>
            <person name="Suzuki T."/>
            <person name="Nihei C."/>
            <person name="Kawai K."/>
            <person name="Minagawa N."/>
            <person name="Hosokawa T."/>
            <person name="Nagai K."/>
            <person name="Kita K."/>
            <person name="Ohta N."/>
        </authorList>
    </citation>
    <scope>BIOTECHNOLOGY</scope>
</reference>
<reference key="4">
    <citation type="journal article" date="2010" name="Parasitol. Int.">
        <title>Trypanosome alternative oxidase, a potential therapeutic target for sleeping sickness, is conserved among Trypanosoma brucei subspecies.</title>
        <authorList>
            <person name="Nakamura K."/>
            <person name="Fujioka S."/>
            <person name="Fukumoto S."/>
            <person name="Inoue N."/>
            <person name="Sakamoto K."/>
            <person name="Hirata H."/>
            <person name="Kido Y."/>
            <person name="Yabu Y."/>
            <person name="Suzuki T."/>
            <person name="Watanabe Y."/>
            <person name="Saimoto H."/>
            <person name="Akiyama H."/>
            <person name="Kita K."/>
        </authorList>
    </citation>
    <scope>BIOTECHNOLOGY</scope>
</reference>
<reference key="5">
    <citation type="journal article" date="2022" name="J. Gen. Appl. Microbiol.">
        <title>Heterologous production of ascofuranone and ilicicolin A in Aspergillus sojae.</title>
        <authorList>
            <person name="Araki Y."/>
            <person name="Shinohara Y."/>
            <person name="Hara S."/>
            <person name="Sato A."/>
            <person name="Sakaue R."/>
            <person name="Gomi K."/>
            <person name="Kita K."/>
            <person name="Ito K."/>
        </authorList>
    </citation>
    <scope>FUNCTION</scope>
    <scope>CATALYTIC ACTIVITY</scope>
    <scope>PATHWAY</scope>
</reference>
<feature type="chain" id="PRO_0000448980" description="Non-canonical non-ribosomal peptide synthetase ascB">
    <location>
        <begin position="1"/>
        <end position="1093"/>
    </location>
</feature>
<feature type="domain" description="Carrier" evidence="3">
    <location>
        <begin position="591"/>
        <end position="678"/>
    </location>
</feature>
<feature type="region of interest" description="Disordered" evidence="4">
    <location>
        <begin position="1"/>
        <end position="27"/>
    </location>
</feature>
<feature type="region of interest" description="Adenylation (A) domain" evidence="2">
    <location>
        <begin position="35"/>
        <end position="392"/>
    </location>
</feature>
<feature type="region of interest" description="Thioester reductase (TR) domain" evidence="2">
    <location>
        <begin position="721"/>
        <end position="971"/>
    </location>
</feature>
<feature type="compositionally biased region" description="Low complexity" evidence="4">
    <location>
        <begin position="1"/>
        <end position="26"/>
    </location>
</feature>
<feature type="modified residue" description="O-(pantetheine 4'-phosphoryl)serine" evidence="3">
    <location>
        <position position="627"/>
    </location>
</feature>
<accession>A0A455R7E6</accession>
<proteinExistence type="evidence at protein level"/>
<keyword id="KW-0511">Multifunctional enzyme</keyword>
<keyword id="KW-0521">NADP</keyword>
<keyword id="KW-0560">Oxidoreductase</keyword>
<keyword id="KW-0596">Phosphopantetheine</keyword>
<keyword id="KW-0597">Phosphoprotein</keyword>
<keyword id="KW-0808">Transferase</keyword>
<sequence>MTVNGHHTNGVNGANGTNGHANGSNGINDTKAVKEIVPFVKPQVNFASAQRLEGCIHSLPELVDFNSLNNQHHTFCVQAKSSEPFDTITHGEFKVAVSKCAAWLKENLPIRPSSDDKALTKMAPVALFMESDIGLVIHEFALMSIGVPPLVLSPRLSPVAINALLEATGAASFIVSPRMSEPLKGALAALAAKGVSTHIGNPYKAYYQPGADPKSVAPFEVPQNPEDVILLLHSSGTTGLPKPIPTTHRQLLFAVNCHKFDTEEQAQSLNLSTLPLFHGFGLVAPGLSMSAGKPTLYPASDGIPNAKSIVDLINKTNAKSMMTVPFLLDDITNLPNEEGIKALVHMDFVGTGGAALGAGIGDRLAKGGVKLLNFYGTTETGPLSLTFAPTDNYDWKYFRLRTDCEYKIDELEPRDGERRFRLTVYPYGSEGFEISDQLIRNEQYPETDFAAVGRDDDVIVLATGEKANPLILETKLTEAPMVKAAIAFGENQFNLGVIVEPAEPLTPDTESAFRESIWPIITAACDQMDAFSRIPSPDAVVLVPAGVVIPRTDKGSIARKETYALFDKQIKGVYEQLLKAAADAVEPLDLDNLEQNLKSLIQEHLHIQAPASDWGVEDSLFDIGVDSLQVLQLRRILVTAASKTEAFKDTDCEKMIPPEFVYMNPSIREIAAALTKGSDGGDVSLEDAAKEVVELAETYSLKGVSAQEKAPSSSEGAFVMLTGATGSLGSHVAADLARRDNVAKVVCLVRKDKGTNQPPMPGGNPFDKKILKARGIQLTDEQFGKLATLEVDPTADKLGLIPMAYGMMQAKVTHVIHAAWPMNYLIRLRNFQYQFKFLRNLLEFASQGPAPTKKRFVFISSIATVARIGLAQPGSISEAPVSPSDSACGIGYADGKLVCEKIMEKAAQDYGGQLDVTSVRCGQMTGSKKTGVWNSNEQIPMLLKSAQGLGSLPQLSGELSWIPVDDAASTVSEIAFSDGSMPIVQHLENPIRQSWDAMLQSFGRELGLPAGKVPFGEWLDQVAAADGDDETFPVKKLTFFFKSFFQSVACGQVVLDTTVSRGQSKTLNAMTAVGDETVKAYADYWKSTGYLSK</sequence>
<organism>
    <name type="scientific">Acremonium egyptiacum</name>
    <name type="common">Oospora egyptiaca</name>
    <dbReference type="NCBI Taxonomy" id="749675"/>
    <lineage>
        <taxon>Eukaryota</taxon>
        <taxon>Fungi</taxon>
        <taxon>Dikarya</taxon>
        <taxon>Ascomycota</taxon>
        <taxon>Pezizomycotina</taxon>
        <taxon>Sordariomycetes</taxon>
        <taxon>Hypocreomycetidae</taxon>
        <taxon>Hypocreales</taxon>
        <taxon>Hypocreales incertae sedis</taxon>
        <taxon>Acremonium</taxon>
    </lineage>
</organism>
<name>ASCB_ACREG</name>
<dbReference type="EC" id="2.3.1.-" evidence="8 9"/>
<dbReference type="EMBL" id="LC406756">
    <property type="protein sequence ID" value="BBF25314.1"/>
    <property type="molecule type" value="Genomic_DNA"/>
</dbReference>
<dbReference type="SMR" id="A0A455R7E6"/>
<dbReference type="UniPathway" id="UPA00213"/>
<dbReference type="GO" id="GO:0016491">
    <property type="term" value="F:oxidoreductase activity"/>
    <property type="evidence" value="ECO:0007669"/>
    <property type="project" value="UniProtKB-KW"/>
</dbReference>
<dbReference type="GO" id="GO:0016740">
    <property type="term" value="F:transferase activity"/>
    <property type="evidence" value="ECO:0007669"/>
    <property type="project" value="UniProtKB-KW"/>
</dbReference>
<dbReference type="GO" id="GO:0016114">
    <property type="term" value="P:terpenoid biosynthetic process"/>
    <property type="evidence" value="ECO:0007669"/>
    <property type="project" value="UniProtKB-UniPathway"/>
</dbReference>
<dbReference type="Gene3D" id="1.10.1200.10">
    <property type="entry name" value="ACP-like"/>
    <property type="match status" value="1"/>
</dbReference>
<dbReference type="Gene3D" id="3.40.50.12780">
    <property type="entry name" value="N-terminal domain of ligase-like"/>
    <property type="match status" value="1"/>
</dbReference>
<dbReference type="Gene3D" id="3.40.50.720">
    <property type="entry name" value="NAD(P)-binding Rossmann-like Domain"/>
    <property type="match status" value="1"/>
</dbReference>
<dbReference type="InterPro" id="IPR036736">
    <property type="entry name" value="ACP-like_sf"/>
</dbReference>
<dbReference type="InterPro" id="IPR051414">
    <property type="entry name" value="Adenylate-forming_Reductase"/>
</dbReference>
<dbReference type="InterPro" id="IPR020845">
    <property type="entry name" value="AMP-binding_CS"/>
</dbReference>
<dbReference type="InterPro" id="IPR000873">
    <property type="entry name" value="AMP-dep_synth/lig_dom"/>
</dbReference>
<dbReference type="InterPro" id="IPR042099">
    <property type="entry name" value="ANL_N_sf"/>
</dbReference>
<dbReference type="InterPro" id="IPR013120">
    <property type="entry name" value="Far_NAD-bd"/>
</dbReference>
<dbReference type="InterPro" id="IPR036291">
    <property type="entry name" value="NAD(P)-bd_dom_sf"/>
</dbReference>
<dbReference type="InterPro" id="IPR009081">
    <property type="entry name" value="PP-bd_ACP"/>
</dbReference>
<dbReference type="InterPro" id="IPR006162">
    <property type="entry name" value="Ppantetheine_attach_site"/>
</dbReference>
<dbReference type="PANTHER" id="PTHR43439:SF2">
    <property type="entry name" value="ENZYME, PUTATIVE (JCVI)-RELATED"/>
    <property type="match status" value="1"/>
</dbReference>
<dbReference type="PANTHER" id="PTHR43439">
    <property type="entry name" value="PHENYLACETATE-COENZYME A LIGASE"/>
    <property type="match status" value="1"/>
</dbReference>
<dbReference type="Pfam" id="PF00501">
    <property type="entry name" value="AMP-binding"/>
    <property type="match status" value="1"/>
</dbReference>
<dbReference type="Pfam" id="PF23562">
    <property type="entry name" value="AMP-binding_C_3"/>
    <property type="match status" value="1"/>
</dbReference>
<dbReference type="Pfam" id="PF07993">
    <property type="entry name" value="NAD_binding_4"/>
    <property type="match status" value="1"/>
</dbReference>
<dbReference type="SUPFAM" id="SSF56801">
    <property type="entry name" value="Acetyl-CoA synthetase-like"/>
    <property type="match status" value="1"/>
</dbReference>
<dbReference type="SUPFAM" id="SSF47336">
    <property type="entry name" value="ACP-like"/>
    <property type="match status" value="1"/>
</dbReference>
<dbReference type="SUPFAM" id="SSF51735">
    <property type="entry name" value="NAD(P)-binding Rossmann-fold domains"/>
    <property type="match status" value="1"/>
</dbReference>
<dbReference type="PROSITE" id="PS00455">
    <property type="entry name" value="AMP_BINDING"/>
    <property type="match status" value="1"/>
</dbReference>
<dbReference type="PROSITE" id="PS50075">
    <property type="entry name" value="CARRIER"/>
    <property type="match status" value="1"/>
</dbReference>
<dbReference type="PROSITE" id="PS00012">
    <property type="entry name" value="PHOSPHOPANTETHEINE"/>
    <property type="match status" value="1"/>
</dbReference>
<evidence type="ECO:0000250" key="1">
    <source>
        <dbReference type="UniProtKB" id="S0DXJ2"/>
    </source>
</evidence>
<evidence type="ECO:0000255" key="2"/>
<evidence type="ECO:0000255" key="3">
    <source>
        <dbReference type="PROSITE-ProRule" id="PRU00258"/>
    </source>
</evidence>
<evidence type="ECO:0000256" key="4">
    <source>
        <dbReference type="SAM" id="MobiDB-lite"/>
    </source>
</evidence>
<evidence type="ECO:0000269" key="5">
    <source>
    </source>
</evidence>
<evidence type="ECO:0000269" key="6">
    <source>
    </source>
</evidence>
<evidence type="ECO:0000269" key="7">
    <source>
    </source>
</evidence>
<evidence type="ECO:0000269" key="8">
    <source>
    </source>
</evidence>
<evidence type="ECO:0000269" key="9">
    <source>
    </source>
</evidence>
<evidence type="ECO:0000303" key="10">
    <source>
    </source>
</evidence>
<evidence type="ECO:0000305" key="11"/>
<gene>
    <name evidence="10" type="primary">ascB</name>
</gene>
<protein>
    <recommendedName>
        <fullName evidence="10">Non-canonical non-ribosomal peptide synthetase ascB</fullName>
        <ecNumber evidence="8 9">2.3.1.-</ecNumber>
    </recommendedName>
    <alternativeName>
        <fullName evidence="10">Ascofuranone/ascochlorin biosynthesis clusters protein B</fullName>
    </alternativeName>
</protein>